<feature type="chain" id="PRO_0000249913" description="5'-3' exoribonuclease 2">
    <location>
        <begin position="1"/>
        <end position="949"/>
    </location>
</feature>
<feature type="zinc finger region" description="CCHC-type">
    <location>
        <begin position="261"/>
        <end position="278"/>
    </location>
</feature>
<feature type="region of interest" description="Disordered" evidence="2">
    <location>
        <begin position="410"/>
        <end position="452"/>
    </location>
</feature>
<feature type="region of interest" description="Disordered" evidence="2">
    <location>
        <begin position="466"/>
        <end position="507"/>
    </location>
</feature>
<feature type="region of interest" description="Disordered" evidence="2">
    <location>
        <begin position="775"/>
        <end position="803"/>
    </location>
</feature>
<feature type="region of interest" description="Disordered" evidence="2">
    <location>
        <begin position="902"/>
        <end position="949"/>
    </location>
</feature>
<feature type="compositionally biased region" description="Basic residues" evidence="2">
    <location>
        <begin position="416"/>
        <end position="427"/>
    </location>
</feature>
<feature type="compositionally biased region" description="Polar residues" evidence="2">
    <location>
        <begin position="438"/>
        <end position="452"/>
    </location>
</feature>
<feature type="compositionally biased region" description="Polar residues" evidence="2">
    <location>
        <begin position="469"/>
        <end position="484"/>
    </location>
</feature>
<feature type="compositionally biased region" description="Basic and acidic residues" evidence="2">
    <location>
        <begin position="783"/>
        <end position="794"/>
    </location>
</feature>
<feature type="compositionally biased region" description="Basic and acidic residues" evidence="2">
    <location>
        <begin position="919"/>
        <end position="928"/>
    </location>
</feature>
<dbReference type="EC" id="3.1.13.-"/>
<dbReference type="EMBL" id="AJ720740">
    <property type="protein sequence ID" value="CAG32399.1"/>
    <property type="molecule type" value="mRNA"/>
</dbReference>
<dbReference type="RefSeq" id="NP_001026204.1">
    <property type="nucleotide sequence ID" value="NM_001031033.2"/>
</dbReference>
<dbReference type="SMR" id="Q5ZIP4"/>
<dbReference type="FunCoup" id="Q5ZIP4">
    <property type="interactions" value="2619"/>
</dbReference>
<dbReference type="STRING" id="9031.ENSGALP00000013622"/>
<dbReference type="PaxDb" id="9031-ENSGALP00000013622"/>
<dbReference type="Ensembl" id="ENSGALT00010043875.1">
    <property type="protein sequence ID" value="ENSGALP00010026092.1"/>
    <property type="gene ID" value="ENSGALG00010018148.1"/>
</dbReference>
<dbReference type="GeneID" id="421236"/>
<dbReference type="KEGG" id="gga:421236"/>
<dbReference type="CTD" id="22803"/>
<dbReference type="VEuPathDB" id="HostDB:geneid_421236"/>
<dbReference type="eggNOG" id="KOG2044">
    <property type="taxonomic scope" value="Eukaryota"/>
</dbReference>
<dbReference type="GeneTree" id="ENSGT00670000098098"/>
<dbReference type="HOGENOM" id="CLU_006038_1_2_1"/>
<dbReference type="InParanoid" id="Q5ZIP4"/>
<dbReference type="OMA" id="ITHDMVV"/>
<dbReference type="OrthoDB" id="372487at2759"/>
<dbReference type="PhylomeDB" id="Q5ZIP4"/>
<dbReference type="TreeFam" id="TF105977"/>
<dbReference type="Reactome" id="R-GGA-6791226">
    <property type="pathway name" value="Major pathway of rRNA processing in the nucleolus and cytosol"/>
</dbReference>
<dbReference type="PRO" id="PR:Q5ZIP4"/>
<dbReference type="Proteomes" id="UP000000539">
    <property type="component" value="Chromosome 3"/>
</dbReference>
<dbReference type="Bgee" id="ENSGALG00000008372">
    <property type="expression patterns" value="Expressed in colon and 12 other cell types or tissues"/>
</dbReference>
<dbReference type="GO" id="GO:0016235">
    <property type="term" value="C:aggresome"/>
    <property type="evidence" value="ECO:0007669"/>
    <property type="project" value="Ensembl"/>
</dbReference>
<dbReference type="GO" id="GO:0005730">
    <property type="term" value="C:nucleolus"/>
    <property type="evidence" value="ECO:0000250"/>
    <property type="project" value="UniProtKB"/>
</dbReference>
<dbReference type="GO" id="GO:0005654">
    <property type="term" value="C:nucleoplasm"/>
    <property type="evidence" value="ECO:0007669"/>
    <property type="project" value="Ensembl"/>
</dbReference>
<dbReference type="GO" id="GO:0005634">
    <property type="term" value="C:nucleus"/>
    <property type="evidence" value="ECO:0000318"/>
    <property type="project" value="GO_Central"/>
</dbReference>
<dbReference type="GO" id="GO:0008409">
    <property type="term" value="F:5'-3' exonuclease activity"/>
    <property type="evidence" value="ECO:0000250"/>
    <property type="project" value="UniProtKB"/>
</dbReference>
<dbReference type="GO" id="GO:0004534">
    <property type="term" value="F:5'-3' RNA exonuclease activity"/>
    <property type="evidence" value="ECO:0000318"/>
    <property type="project" value="GO_Central"/>
</dbReference>
<dbReference type="GO" id="GO:0042802">
    <property type="term" value="F:identical protein binding"/>
    <property type="evidence" value="ECO:0007669"/>
    <property type="project" value="Ensembl"/>
</dbReference>
<dbReference type="GO" id="GO:0003723">
    <property type="term" value="F:RNA binding"/>
    <property type="evidence" value="ECO:0000318"/>
    <property type="project" value="GO_Central"/>
</dbReference>
<dbReference type="GO" id="GO:0001147">
    <property type="term" value="F:transcription termination site sequence-specific DNA binding"/>
    <property type="evidence" value="ECO:0007669"/>
    <property type="project" value="Ensembl"/>
</dbReference>
<dbReference type="GO" id="GO:0008270">
    <property type="term" value="F:zinc ion binding"/>
    <property type="evidence" value="ECO:0007669"/>
    <property type="project" value="UniProtKB-KW"/>
</dbReference>
<dbReference type="GO" id="GO:0006397">
    <property type="term" value="P:mRNA processing"/>
    <property type="evidence" value="ECO:0007669"/>
    <property type="project" value="UniProtKB-KW"/>
</dbReference>
<dbReference type="GO" id="GO:0000956">
    <property type="term" value="P:nuclear-transcribed mRNA catabolic process"/>
    <property type="evidence" value="ECO:0000318"/>
    <property type="project" value="GO_Central"/>
</dbReference>
<dbReference type="GO" id="GO:0007283">
    <property type="term" value="P:spermatogenesis"/>
    <property type="evidence" value="ECO:0007669"/>
    <property type="project" value="Ensembl"/>
</dbReference>
<dbReference type="GO" id="GO:0006369">
    <property type="term" value="P:termination of RNA polymerase II transcription"/>
    <property type="evidence" value="ECO:0000250"/>
    <property type="project" value="UniProtKB"/>
</dbReference>
<dbReference type="CDD" id="cd18673">
    <property type="entry name" value="PIN_XRN1-2-like"/>
    <property type="match status" value="1"/>
</dbReference>
<dbReference type="FunFam" id="1.25.40.1050:FF:000002">
    <property type="entry name" value="5'-3' exoribonuclease"/>
    <property type="match status" value="1"/>
</dbReference>
<dbReference type="FunFam" id="3.40.50.12390:FF:000001">
    <property type="entry name" value="5'-3' exoribonuclease"/>
    <property type="match status" value="1"/>
</dbReference>
<dbReference type="FunFam" id="3.40.50.12390:FF:000003">
    <property type="entry name" value="5'-3' exoribonuclease"/>
    <property type="match status" value="1"/>
</dbReference>
<dbReference type="Gene3D" id="1.25.40.1050">
    <property type="match status" value="1"/>
</dbReference>
<dbReference type="Gene3D" id="3.40.50.12390">
    <property type="match status" value="2"/>
</dbReference>
<dbReference type="InterPro" id="IPR027073">
    <property type="entry name" value="5_3_exoribonuclease"/>
</dbReference>
<dbReference type="InterPro" id="IPR041412">
    <property type="entry name" value="Xrn1_helical"/>
</dbReference>
<dbReference type="InterPro" id="IPR004859">
    <property type="entry name" value="Xrn1_N"/>
</dbReference>
<dbReference type="InterPro" id="IPR017151">
    <property type="entry name" value="Xrn2/3/4"/>
</dbReference>
<dbReference type="PANTHER" id="PTHR12341:SF41">
    <property type="entry name" value="5'-3' EXORIBONUCLEASE 2"/>
    <property type="match status" value="1"/>
</dbReference>
<dbReference type="PANTHER" id="PTHR12341">
    <property type="entry name" value="5'-&gt;3' EXORIBONUCLEASE"/>
    <property type="match status" value="1"/>
</dbReference>
<dbReference type="Pfam" id="PF17846">
    <property type="entry name" value="XRN_M"/>
    <property type="match status" value="1"/>
</dbReference>
<dbReference type="Pfam" id="PF03159">
    <property type="entry name" value="XRN_N"/>
    <property type="match status" value="1"/>
</dbReference>
<dbReference type="PIRSF" id="PIRSF037239">
    <property type="entry name" value="Exonuclease_Xrn2"/>
    <property type="match status" value="1"/>
</dbReference>
<protein>
    <recommendedName>
        <fullName>5'-3' exoribonuclease 2</fullName>
        <ecNumber>3.1.13.-</ecNumber>
    </recommendedName>
</protein>
<accession>Q5ZIP4</accession>
<gene>
    <name type="primary">XRN2</name>
    <name type="ORF">RCJMB04_24h23</name>
</gene>
<reference key="1">
    <citation type="journal article" date="2005" name="Genome Biol.">
        <title>Full-length cDNAs from chicken bursal lymphocytes to facilitate gene function analysis.</title>
        <authorList>
            <person name="Caldwell R.B."/>
            <person name="Kierzek A.M."/>
            <person name="Arakawa H."/>
            <person name="Bezzubov Y."/>
            <person name="Zaim J."/>
            <person name="Fiedler P."/>
            <person name="Kutter S."/>
            <person name="Blagodatski A."/>
            <person name="Kostovska D."/>
            <person name="Koter M."/>
            <person name="Plachy J."/>
            <person name="Carninci P."/>
            <person name="Hayashizaki Y."/>
            <person name="Buerstedde J.-M."/>
        </authorList>
    </citation>
    <scope>NUCLEOTIDE SEQUENCE [LARGE SCALE MRNA]</scope>
    <source>
        <strain>CB</strain>
        <tissue>Bursa of Fabricius</tissue>
    </source>
</reference>
<comment type="function">
    <text evidence="1">Possesses 5'-&gt;3' exoribonuclease activity. May promote the termination of transcription by RNA polymerase II (By similarity).</text>
</comment>
<comment type="subcellular location">
    <subcellularLocation>
        <location evidence="1">Nucleus</location>
        <location evidence="1">Nucleolus</location>
    </subcellularLocation>
</comment>
<comment type="similarity">
    <text evidence="3">Belongs to the 5'-3' exonuclease family. XRN2/RAT1 subfamily.</text>
</comment>
<keyword id="KW-0269">Exonuclease</keyword>
<keyword id="KW-0378">Hydrolase</keyword>
<keyword id="KW-0479">Metal-binding</keyword>
<keyword id="KW-0507">mRNA processing</keyword>
<keyword id="KW-0540">Nuclease</keyword>
<keyword id="KW-0539">Nucleus</keyword>
<keyword id="KW-1185">Reference proteome</keyword>
<keyword id="KW-0804">Transcription</keyword>
<keyword id="KW-0805">Transcription regulation</keyword>
<keyword id="KW-0806">Transcription termination</keyword>
<keyword id="KW-0862">Zinc</keyword>
<keyword id="KW-0863">Zinc-finger</keyword>
<sequence length="949" mass="108542">MGVPAFFRWLSRKYPSIIVNCVEEKAKECNGVKASVDTSKPNPNEVEFDNLYLDMNGIIHPCTHPEDKPAPKNEDEMMVAIFEYIDRIFNIVRPRRLLYMAIDGVAPRAKMNQQRSRRFRASKEGMEAAEEKQKIRQEILAKGGILPPEEVKERFDSNCITPGTEFMDNLAKCLRYYIADRLNSDPGWKNLTVILSDASAPGEGEHKIMDYIRRQRAQPNHDPNTHHCLCGADADLIMLGLATHEPHFTIIREEFKPNKPKPCALCNQMGHEVKDCQGLPREKQGKHDQFADSLPASEQEFIFIRLCVLREYLERELTMASLPFTFDFERSVDDWVFMCFFVGNDFLPHLPSLEIREGAIDRLVNIYKNVVHKTGGYLTESGFVNLQRVQMIMLAVGEVEDSIFKKRKDDDDNFKRRQKEKKKRMKRDHPSFIPGGQFSPQALGNRSSPQAISNPRQTAFEMRMHDRQNSTMSSPNTSLNSDGSPSPARGIKRKSEDSDSEPEPEDNIRLWESGWKQRYYKNKFDVDASDEKFRRKVVQSYVEGLCWVLRYYYQGCASWNWYYPFHYAPFASDFEGIADMPSDFEKGSKPFKPLEQLMGVFPAASGNFLPPTWRKLMTDPESSIIDFYPEDFAIDLNGKKYAWQGVALLPFVDERRLRAALEEVYPDLTPEENRRNSLGGDVLFVGKHHPLCDFIVEQYKSKNTEPVDMPPELCYGIQGKLTPNENAVLPDKTVESPVPMLRDLTQNSAVSISFKDPQFDEDFIFKATVLPGAKKPPPVLKPGDWEKTNNDGRPWRPQLGFNRDRKPVHLDQSAFRTLGHAMPRERGMPGMYANAVPLGAYGSPYTRPLMSGQQQIPKLLSNLRPQESWRGPTPLFQQAPQRTAGAAPLLAWNRMLPAQSQYPPGQYQGLGGPMSYPQRPEDRMDRGRQAYGPGRPYLLPPPSGRYSWN</sequence>
<proteinExistence type="evidence at transcript level"/>
<evidence type="ECO:0000250" key="1"/>
<evidence type="ECO:0000256" key="2">
    <source>
        <dbReference type="SAM" id="MobiDB-lite"/>
    </source>
</evidence>
<evidence type="ECO:0000305" key="3"/>
<name>XRN2_CHICK</name>
<organism>
    <name type="scientific">Gallus gallus</name>
    <name type="common">Chicken</name>
    <dbReference type="NCBI Taxonomy" id="9031"/>
    <lineage>
        <taxon>Eukaryota</taxon>
        <taxon>Metazoa</taxon>
        <taxon>Chordata</taxon>
        <taxon>Craniata</taxon>
        <taxon>Vertebrata</taxon>
        <taxon>Euteleostomi</taxon>
        <taxon>Archelosauria</taxon>
        <taxon>Archosauria</taxon>
        <taxon>Dinosauria</taxon>
        <taxon>Saurischia</taxon>
        <taxon>Theropoda</taxon>
        <taxon>Coelurosauria</taxon>
        <taxon>Aves</taxon>
        <taxon>Neognathae</taxon>
        <taxon>Galloanserae</taxon>
        <taxon>Galliformes</taxon>
        <taxon>Phasianidae</taxon>
        <taxon>Phasianinae</taxon>
        <taxon>Gallus</taxon>
    </lineage>
</organism>